<dbReference type="EMBL" id="U33007">
    <property type="protein sequence ID" value="AAB64860.1"/>
    <property type="molecule type" value="Genomic_DNA"/>
</dbReference>
<dbReference type="EMBL" id="BK006938">
    <property type="protein sequence ID" value="DAA12275.1"/>
    <property type="molecule type" value="Genomic_DNA"/>
</dbReference>
<dbReference type="PIR" id="S69718">
    <property type="entry name" value="S69718"/>
</dbReference>
<dbReference type="RefSeq" id="NP_010726.3">
    <property type="nucleotide sequence ID" value="NM_001180746.3"/>
</dbReference>
<dbReference type="SMR" id="Q04083"/>
<dbReference type="BioGRID" id="32494">
    <property type="interactions" value="28"/>
</dbReference>
<dbReference type="DIP" id="DIP-5126N"/>
<dbReference type="FunCoup" id="Q04083">
    <property type="interactions" value="401"/>
</dbReference>
<dbReference type="IntAct" id="Q04083">
    <property type="interactions" value="1"/>
</dbReference>
<dbReference type="STRING" id="4932.YDR438W"/>
<dbReference type="TCDB" id="2.A.7.24.1">
    <property type="family name" value="the drug/metabolite transporter (dmt) superfamily"/>
</dbReference>
<dbReference type="iPTMnet" id="Q04083"/>
<dbReference type="PaxDb" id="4932-YDR438W"/>
<dbReference type="EnsemblFungi" id="YDR438W_mRNA">
    <property type="protein sequence ID" value="YDR438W"/>
    <property type="gene ID" value="YDR438W"/>
</dbReference>
<dbReference type="GeneID" id="852048"/>
<dbReference type="KEGG" id="sce:YDR438W"/>
<dbReference type="AGR" id="SGD:S000002846"/>
<dbReference type="SGD" id="S000002846">
    <property type="gene designation" value="THI74"/>
</dbReference>
<dbReference type="VEuPathDB" id="FungiDB:YDR438W"/>
<dbReference type="eggNOG" id="KOG2765">
    <property type="taxonomic scope" value="Eukaryota"/>
</dbReference>
<dbReference type="GeneTree" id="ENSGT00390000005949"/>
<dbReference type="HOGENOM" id="CLU_026578_1_0_1"/>
<dbReference type="InParanoid" id="Q04083"/>
<dbReference type="OMA" id="FWCKALI"/>
<dbReference type="OrthoDB" id="1436450at2759"/>
<dbReference type="BioCyc" id="YEAST:G3O-29972-MONOMER"/>
<dbReference type="BioGRID-ORCS" id="852048">
    <property type="hits" value="2 hits in 10 CRISPR screens"/>
</dbReference>
<dbReference type="PRO" id="PR:Q04083"/>
<dbReference type="Proteomes" id="UP000002311">
    <property type="component" value="Chromosome IV"/>
</dbReference>
<dbReference type="RNAct" id="Q04083">
    <property type="molecule type" value="protein"/>
</dbReference>
<dbReference type="GO" id="GO:0000324">
    <property type="term" value="C:fungal-type vacuole"/>
    <property type="evidence" value="ECO:0007005"/>
    <property type="project" value="SGD"/>
</dbReference>
<dbReference type="GO" id="GO:0031966">
    <property type="term" value="C:mitochondrial membrane"/>
    <property type="evidence" value="ECO:0007669"/>
    <property type="project" value="UniProtKB-SubCell"/>
</dbReference>
<dbReference type="GO" id="GO:0005739">
    <property type="term" value="C:mitochondrion"/>
    <property type="evidence" value="ECO:0000314"/>
    <property type="project" value="SGD"/>
</dbReference>
<dbReference type="PANTHER" id="PTHR23051:SF0">
    <property type="entry name" value="SOLUTE CARRIER FAMILY 35 MEMBER F5"/>
    <property type="match status" value="1"/>
</dbReference>
<dbReference type="PANTHER" id="PTHR23051">
    <property type="entry name" value="SOLUTE CARRIER FAMILY 35, MEMBER F5"/>
    <property type="match status" value="1"/>
</dbReference>
<dbReference type="SUPFAM" id="SSF103481">
    <property type="entry name" value="Multidrug resistance efflux transporter EmrE"/>
    <property type="match status" value="1"/>
</dbReference>
<feature type="chain" id="PRO_0000252277" description="Thiamine-repressible mitochondrial transport protein THI74">
    <location>
        <begin position="1"/>
        <end position="370"/>
    </location>
</feature>
<feature type="topological domain" description="Cytoplasmic" evidence="1">
    <location>
        <begin position="1"/>
        <end position="10"/>
    </location>
</feature>
<feature type="transmembrane region" description="Helical" evidence="1">
    <location>
        <begin position="11"/>
        <end position="31"/>
    </location>
</feature>
<feature type="topological domain" description="Mitochondrial intermembrane" evidence="1">
    <location>
        <begin position="32"/>
        <end position="42"/>
    </location>
</feature>
<feature type="transmembrane region" description="Helical" evidence="1">
    <location>
        <begin position="43"/>
        <end position="63"/>
    </location>
</feature>
<feature type="topological domain" description="Cytoplasmic" evidence="1">
    <location>
        <begin position="64"/>
        <end position="119"/>
    </location>
</feature>
<feature type="transmembrane region" description="Helical" evidence="1">
    <location>
        <begin position="120"/>
        <end position="140"/>
    </location>
</feature>
<feature type="topological domain" description="Mitochondrial intermembrane" evidence="1">
    <location>
        <begin position="141"/>
        <end position="146"/>
    </location>
</feature>
<feature type="transmembrane region" description="Helical" evidence="1">
    <location>
        <begin position="147"/>
        <end position="167"/>
    </location>
</feature>
<feature type="topological domain" description="Cytoplasmic" evidence="1">
    <location>
        <begin position="168"/>
        <end position="169"/>
    </location>
</feature>
<feature type="transmembrane region" description="Helical" evidence="1">
    <location>
        <begin position="170"/>
        <end position="190"/>
    </location>
</feature>
<feature type="topological domain" description="Mitochondrial intermembrane" evidence="1">
    <location>
        <begin position="191"/>
        <end position="203"/>
    </location>
</feature>
<feature type="transmembrane region" description="Helical" evidence="1">
    <location>
        <begin position="204"/>
        <end position="224"/>
    </location>
</feature>
<feature type="topological domain" description="Cytoplasmic" evidence="1">
    <location>
        <begin position="225"/>
        <end position="239"/>
    </location>
</feature>
<feature type="transmembrane region" description="Helical" evidence="1">
    <location>
        <begin position="240"/>
        <end position="260"/>
    </location>
</feature>
<feature type="topological domain" description="Mitochondrial intermembrane" evidence="1">
    <location>
        <begin position="261"/>
        <end position="273"/>
    </location>
</feature>
<feature type="transmembrane region" description="Helical" evidence="1">
    <location>
        <begin position="274"/>
        <end position="294"/>
    </location>
</feature>
<feature type="topological domain" description="Cytoplasmic" evidence="1">
    <location>
        <begin position="295"/>
        <end position="303"/>
    </location>
</feature>
<feature type="transmembrane region" description="Helical" evidence="1">
    <location>
        <begin position="304"/>
        <end position="324"/>
    </location>
</feature>
<feature type="topological domain" description="Mitochondrial intermembrane" evidence="1">
    <location>
        <begin position="325"/>
        <end position="326"/>
    </location>
</feature>
<feature type="transmembrane region" description="Helical" evidence="1">
    <location>
        <begin position="327"/>
        <end position="347"/>
    </location>
</feature>
<feature type="topological domain" description="Cytoplasmic" evidence="1">
    <location>
        <begin position="348"/>
        <end position="370"/>
    </location>
</feature>
<feature type="domain" description="EamA">
    <location>
        <begin position="129"/>
        <end position="190"/>
    </location>
</feature>
<protein>
    <recommendedName>
        <fullName>Thiamine-repressible mitochondrial transport protein THI74</fullName>
    </recommendedName>
</protein>
<accession>Q04083</accession>
<accession>D6VT65</accession>
<proteinExistence type="evidence at protein level"/>
<organism>
    <name type="scientific">Saccharomyces cerevisiae (strain ATCC 204508 / S288c)</name>
    <name type="common">Baker's yeast</name>
    <dbReference type="NCBI Taxonomy" id="559292"/>
    <lineage>
        <taxon>Eukaryota</taxon>
        <taxon>Fungi</taxon>
        <taxon>Dikarya</taxon>
        <taxon>Ascomycota</taxon>
        <taxon>Saccharomycotina</taxon>
        <taxon>Saccharomycetes</taxon>
        <taxon>Saccharomycetales</taxon>
        <taxon>Saccharomycetaceae</taxon>
        <taxon>Saccharomyces</taxon>
    </lineage>
</organism>
<name>THI74_YEAST</name>
<comment type="function">
    <text>May be involved in thiaminediphosphate transport across the mitochondrial membrane.</text>
</comment>
<comment type="subcellular location">
    <subcellularLocation>
        <location evidence="2">Mitochondrion membrane</location>
        <topology evidence="2">Multi-pass membrane protein</topology>
    </subcellularLocation>
</comment>
<comment type="induction">
    <text evidence="2">Repressed by thiamine.</text>
</comment>
<gene>
    <name type="primary">THI74</name>
    <name type="ordered locus">YDR438W</name>
</gene>
<keyword id="KW-0472">Membrane</keyword>
<keyword id="KW-0496">Mitochondrion</keyword>
<keyword id="KW-1185">Reference proteome</keyword>
<keyword id="KW-0812">Transmembrane</keyword>
<keyword id="KW-1133">Transmembrane helix</keyword>
<reference key="1">
    <citation type="journal article" date="1997" name="Nature">
        <title>The nucleotide sequence of Saccharomyces cerevisiae chromosome IV.</title>
        <authorList>
            <person name="Jacq C."/>
            <person name="Alt-Moerbe J."/>
            <person name="Andre B."/>
            <person name="Arnold W."/>
            <person name="Bahr A."/>
            <person name="Ballesta J.P.G."/>
            <person name="Bargues M."/>
            <person name="Baron L."/>
            <person name="Becker A."/>
            <person name="Biteau N."/>
            <person name="Bloecker H."/>
            <person name="Blugeon C."/>
            <person name="Boskovic J."/>
            <person name="Brandt P."/>
            <person name="Brueckner M."/>
            <person name="Buitrago M.J."/>
            <person name="Coster F."/>
            <person name="Delaveau T."/>
            <person name="del Rey F."/>
            <person name="Dujon B."/>
            <person name="Eide L.G."/>
            <person name="Garcia-Cantalejo J.M."/>
            <person name="Goffeau A."/>
            <person name="Gomez-Peris A."/>
            <person name="Granotier C."/>
            <person name="Hanemann V."/>
            <person name="Hankeln T."/>
            <person name="Hoheisel J.D."/>
            <person name="Jaeger W."/>
            <person name="Jimenez A."/>
            <person name="Jonniaux J.-L."/>
            <person name="Kraemer C."/>
            <person name="Kuester H."/>
            <person name="Laamanen P."/>
            <person name="Legros Y."/>
            <person name="Louis E.J."/>
            <person name="Moeller-Rieker S."/>
            <person name="Monnet A."/>
            <person name="Moro M."/>
            <person name="Mueller-Auer S."/>
            <person name="Nussbaumer B."/>
            <person name="Paricio N."/>
            <person name="Paulin L."/>
            <person name="Perea J."/>
            <person name="Perez-Alonso M."/>
            <person name="Perez-Ortin J.E."/>
            <person name="Pohl T.M."/>
            <person name="Prydz H."/>
            <person name="Purnelle B."/>
            <person name="Rasmussen S.W."/>
            <person name="Remacha M.A."/>
            <person name="Revuelta J.L."/>
            <person name="Rieger M."/>
            <person name="Salom D."/>
            <person name="Saluz H.P."/>
            <person name="Saiz J.E."/>
            <person name="Saren A.-M."/>
            <person name="Schaefer M."/>
            <person name="Scharfe M."/>
            <person name="Schmidt E.R."/>
            <person name="Schneider C."/>
            <person name="Scholler P."/>
            <person name="Schwarz S."/>
            <person name="Soler-Mira A."/>
            <person name="Urrestarazu L.A."/>
            <person name="Verhasselt P."/>
            <person name="Vissers S."/>
            <person name="Voet M."/>
            <person name="Volckaert G."/>
            <person name="Wagner G."/>
            <person name="Wambutt R."/>
            <person name="Wedler E."/>
            <person name="Wedler H."/>
            <person name="Woelfl S."/>
            <person name="Harris D.E."/>
            <person name="Bowman S."/>
            <person name="Brown D."/>
            <person name="Churcher C.M."/>
            <person name="Connor R."/>
            <person name="Dedman K."/>
            <person name="Gentles S."/>
            <person name="Hamlin N."/>
            <person name="Hunt S."/>
            <person name="Jones L."/>
            <person name="McDonald S."/>
            <person name="Murphy L.D."/>
            <person name="Niblett D."/>
            <person name="Odell C."/>
            <person name="Oliver K."/>
            <person name="Rajandream M.A."/>
            <person name="Richards C."/>
            <person name="Shore L."/>
            <person name="Walsh S.V."/>
            <person name="Barrell B.G."/>
            <person name="Dietrich F.S."/>
            <person name="Mulligan J.T."/>
            <person name="Allen E."/>
            <person name="Araujo R."/>
            <person name="Aviles E."/>
            <person name="Berno A."/>
            <person name="Carpenter J."/>
            <person name="Chen E."/>
            <person name="Cherry J.M."/>
            <person name="Chung E."/>
            <person name="Duncan M."/>
            <person name="Hunicke-Smith S."/>
            <person name="Hyman R.W."/>
            <person name="Komp C."/>
            <person name="Lashkari D."/>
            <person name="Lew H."/>
            <person name="Lin D."/>
            <person name="Mosedale D."/>
            <person name="Nakahara K."/>
            <person name="Namath A."/>
            <person name="Oefner P."/>
            <person name="Oh C."/>
            <person name="Petel F.X."/>
            <person name="Roberts D."/>
            <person name="Schramm S."/>
            <person name="Schroeder M."/>
            <person name="Shogren T."/>
            <person name="Shroff N."/>
            <person name="Winant A."/>
            <person name="Yelton M.A."/>
            <person name="Botstein D."/>
            <person name="Davis R.W."/>
            <person name="Johnston M."/>
            <person name="Andrews S."/>
            <person name="Brinkman R."/>
            <person name="Cooper J."/>
            <person name="Ding H."/>
            <person name="Du Z."/>
            <person name="Favello A."/>
            <person name="Fulton L."/>
            <person name="Gattung S."/>
            <person name="Greco T."/>
            <person name="Hallsworth K."/>
            <person name="Hawkins J."/>
            <person name="Hillier L.W."/>
            <person name="Jier M."/>
            <person name="Johnson D."/>
            <person name="Johnston L."/>
            <person name="Kirsten J."/>
            <person name="Kucaba T."/>
            <person name="Langston Y."/>
            <person name="Latreille P."/>
            <person name="Le T."/>
            <person name="Mardis E."/>
            <person name="Menezes S."/>
            <person name="Miller N."/>
            <person name="Nhan M."/>
            <person name="Pauley A."/>
            <person name="Peluso D."/>
            <person name="Rifkin L."/>
            <person name="Riles L."/>
            <person name="Taich A."/>
            <person name="Trevaskis E."/>
            <person name="Vignati D."/>
            <person name="Wilcox L."/>
            <person name="Wohldman P."/>
            <person name="Vaudin M."/>
            <person name="Wilson R."/>
            <person name="Waterston R."/>
            <person name="Albermann K."/>
            <person name="Hani J."/>
            <person name="Heumann K."/>
            <person name="Kleine K."/>
            <person name="Mewes H.-W."/>
            <person name="Zollner A."/>
            <person name="Zaccaria P."/>
        </authorList>
    </citation>
    <scope>NUCLEOTIDE SEQUENCE [LARGE SCALE GENOMIC DNA]</scope>
    <source>
        <strain>ATCC 204508 / S288c</strain>
    </source>
</reference>
<reference key="2">
    <citation type="journal article" date="2014" name="G3 (Bethesda)">
        <title>The reference genome sequence of Saccharomyces cerevisiae: Then and now.</title>
        <authorList>
            <person name="Engel S.R."/>
            <person name="Dietrich F.S."/>
            <person name="Fisk D.G."/>
            <person name="Binkley G."/>
            <person name="Balakrishnan R."/>
            <person name="Costanzo M.C."/>
            <person name="Dwight S.S."/>
            <person name="Hitz B.C."/>
            <person name="Karra K."/>
            <person name="Nash R.S."/>
            <person name="Weng S."/>
            <person name="Wong E.D."/>
            <person name="Lloyd P."/>
            <person name="Skrzypek M.S."/>
            <person name="Miyasato S.R."/>
            <person name="Simison M."/>
            <person name="Cherry J.M."/>
        </authorList>
    </citation>
    <scope>GENOME REANNOTATION</scope>
    <source>
        <strain>ATCC 204508 / S288c</strain>
    </source>
</reference>
<reference key="3">
    <citation type="journal article" date="2003" name="J. Biol. Chem.">
        <title>Topology models for 37 Saccharomyces cerevisiae membrane proteins based on C-terminal reporter fusions and predictions.</title>
        <authorList>
            <person name="Kim H."/>
            <person name="Melen K."/>
            <person name="von Heijne G."/>
        </authorList>
    </citation>
    <scope>TOPOLOGY</scope>
</reference>
<reference key="4">
    <citation type="journal article" date="2006" name="Mol. Genet. Genomics">
        <title>Pdc2 coordinates expression of the THI regulon in the yeast Saccharomyces cerevisiae.</title>
        <authorList>
            <person name="Mojzita D."/>
            <person name="Hohmann S."/>
        </authorList>
    </citation>
    <scope>SUBCELLULAR LOCATION</scope>
    <scope>INDUCTION</scope>
</reference>
<reference key="5">
    <citation type="journal article" date="2006" name="Proc. Natl. Acad. Sci. U.S.A.">
        <title>A global topology map of the Saccharomyces cerevisiae membrane proteome.</title>
        <authorList>
            <person name="Kim H."/>
            <person name="Melen K."/>
            <person name="Oesterberg M."/>
            <person name="von Heijne G."/>
        </authorList>
    </citation>
    <scope>TOPOLOGY [LARGE SCALE ANALYSIS]</scope>
    <source>
        <strain>ATCC 208353 / W303-1A</strain>
    </source>
</reference>
<sequence length="370" mass="41385">MNRVGIDVDHMIGVLLLAVVVVFWVGASCLTNELLETNAYNKPFFLTYLNISSFALYLTPDLWRIIQSRRKSLQERTERTLPIHTQESFSEFLPLLSSTPSTSSNLSSIADTKVKDTMRLSLLFCVLWFVANLAANAALSYTTVASSTILSSTSSFFTLFLATSLGIETFSTKKLLGLFVSLFGIILIVMQSSKQQDSVSASSFLVGNTLALLGSLGYSVYTTLLKYEISSKGLRLDIQMFLGYVGIFTFLLFWPILIILDITHMETFELPSNFHISFLVMLNCIIIFVSDYFWCKALILTSPLVVTVALTFTIPLAMFADFVWREAFFTPWYIIGVIFIFVSFFLVNHRGESAVEKDCAAVEKGPILDA</sequence>
<evidence type="ECO:0000255" key="1"/>
<evidence type="ECO:0000269" key="2">
    <source>
    </source>
</evidence>